<dbReference type="EMBL" id="AJ223982">
    <property type="protein sequence ID" value="CAA11756.1"/>
    <property type="molecule type" value="mRNA"/>
</dbReference>
<dbReference type="PIR" id="T07768">
    <property type="entry name" value="T07768"/>
</dbReference>
<dbReference type="SMR" id="O65809"/>
<dbReference type="FunCoup" id="O65809">
    <property type="interactions" value="2972"/>
</dbReference>
<dbReference type="STRING" id="3847.O65809"/>
<dbReference type="Allergome" id="372">
    <property type="allergen name" value="Gly m 3"/>
</dbReference>
<dbReference type="Allergome" id="373">
    <property type="allergen name" value="Gly m 3.0101"/>
</dbReference>
<dbReference type="PaxDb" id="3847-GLYMA05G35970.1"/>
<dbReference type="eggNOG" id="KOG1755">
    <property type="taxonomic scope" value="Eukaryota"/>
</dbReference>
<dbReference type="InParanoid" id="O65809"/>
<dbReference type="Proteomes" id="UP000008827">
    <property type="component" value="Unplaced"/>
</dbReference>
<dbReference type="GO" id="GO:0005938">
    <property type="term" value="C:cell cortex"/>
    <property type="evidence" value="ECO:0000318"/>
    <property type="project" value="GO_Central"/>
</dbReference>
<dbReference type="GO" id="GO:0005856">
    <property type="term" value="C:cytoskeleton"/>
    <property type="evidence" value="ECO:0007669"/>
    <property type="project" value="UniProtKB-SubCell"/>
</dbReference>
<dbReference type="GO" id="GO:0003785">
    <property type="term" value="F:actin monomer binding"/>
    <property type="evidence" value="ECO:0000318"/>
    <property type="project" value="GO_Central"/>
</dbReference>
<dbReference type="CDD" id="cd00148">
    <property type="entry name" value="PROF"/>
    <property type="match status" value="1"/>
</dbReference>
<dbReference type="FunFam" id="3.30.450.30:FF:000001">
    <property type="entry name" value="Profilin"/>
    <property type="match status" value="1"/>
</dbReference>
<dbReference type="Gene3D" id="3.30.450.30">
    <property type="entry name" value="Dynein light chain 2a, cytoplasmic"/>
    <property type="match status" value="1"/>
</dbReference>
<dbReference type="InterPro" id="IPR048278">
    <property type="entry name" value="PFN"/>
</dbReference>
<dbReference type="InterPro" id="IPR005455">
    <property type="entry name" value="PFN_euk"/>
</dbReference>
<dbReference type="InterPro" id="IPR036140">
    <property type="entry name" value="PFN_sf"/>
</dbReference>
<dbReference type="InterPro" id="IPR027310">
    <property type="entry name" value="Profilin_CS"/>
</dbReference>
<dbReference type="PANTHER" id="PTHR11604">
    <property type="entry name" value="PROFILIN"/>
    <property type="match status" value="1"/>
</dbReference>
<dbReference type="PANTHER" id="PTHR11604:SF46">
    <property type="entry name" value="PROFILIN-1"/>
    <property type="match status" value="1"/>
</dbReference>
<dbReference type="Pfam" id="PF00235">
    <property type="entry name" value="Profilin"/>
    <property type="match status" value="1"/>
</dbReference>
<dbReference type="PRINTS" id="PR00392">
    <property type="entry name" value="PROFILIN"/>
</dbReference>
<dbReference type="PRINTS" id="PR01640">
    <property type="entry name" value="PROFILINPLNT"/>
</dbReference>
<dbReference type="SMART" id="SM00392">
    <property type="entry name" value="PROF"/>
    <property type="match status" value="1"/>
</dbReference>
<dbReference type="SUPFAM" id="SSF55770">
    <property type="entry name" value="Profilin (actin-binding protein)"/>
    <property type="match status" value="1"/>
</dbReference>
<dbReference type="PROSITE" id="PS00414">
    <property type="entry name" value="PROFILIN"/>
    <property type="match status" value="1"/>
</dbReference>
<comment type="function">
    <text evidence="1">Binds to actin and affects the structure of the cytoskeleton. At high concentrations, profilin prevents the polymerization of actin, whereas it enhances it at low concentrations. By binding to PIP2, it inhibits the formation of IP3 and DG (By similarity).</text>
</comment>
<comment type="subunit">
    <text>Occurs in many kinds of cells as a complex with monomeric actin in a 1:1 ratio.</text>
</comment>
<comment type="subcellular location">
    <subcellularLocation>
        <location evidence="1">Cytoplasm</location>
        <location evidence="1">Cytoskeleton</location>
    </subcellularLocation>
</comment>
<comment type="allergen">
    <text evidence="2">Causes an allergic reaction in human.</text>
</comment>
<comment type="similarity">
    <text evidence="3">Belongs to the profilin family.</text>
</comment>
<reference key="1">
    <citation type="journal article" date="1999" name="J. Allergy Clin. Immunol.">
        <title>IgE binding of the recombinant allergen soybean profilin (rGly m 3) is mediated by conformational epitopes.</title>
        <authorList>
            <person name="Rihs H.-P."/>
            <person name="Chen Z."/>
            <person name="Rueff F."/>
            <person name="Petersen A."/>
            <person name="Rozynek P."/>
            <person name="Heimann H."/>
            <person name="Baur X."/>
        </authorList>
    </citation>
    <scope>NUCLEOTIDE SEQUENCE [MRNA]</scope>
    <scope>ALLERGEN</scope>
</reference>
<name>PROF1_SOYBN</name>
<proteinExistence type="evidence at protein level"/>
<feature type="initiator methionine" description="Removed" evidence="1">
    <location>
        <position position="1"/>
    </location>
</feature>
<feature type="chain" id="PRO_0000199672" description="Profilin-1">
    <location>
        <begin position="2"/>
        <end position="131"/>
    </location>
</feature>
<sequence>MSWQAYVDDHLLCDIEGNHLTHAAIIGQDGSVWAQSTDFPQFKPEEITAIMNDFNEPGSLAPTGLYLGGTKYMVIQGEPGAVIRGKKGPGGVTVKKTGAALIIGIYDEPMTPGQCNMVVERPGDYLIDQGY</sequence>
<keyword id="KW-0009">Actin-binding</keyword>
<keyword id="KW-0020">Allergen</keyword>
<keyword id="KW-0963">Cytoplasm</keyword>
<keyword id="KW-0206">Cytoskeleton</keyword>
<keyword id="KW-1185">Reference proteome</keyword>
<gene>
    <name type="primary">PRO1</name>
</gene>
<accession>O65809</accession>
<organism>
    <name type="scientific">Glycine max</name>
    <name type="common">Soybean</name>
    <name type="synonym">Glycine hispida</name>
    <dbReference type="NCBI Taxonomy" id="3847"/>
    <lineage>
        <taxon>Eukaryota</taxon>
        <taxon>Viridiplantae</taxon>
        <taxon>Streptophyta</taxon>
        <taxon>Embryophyta</taxon>
        <taxon>Tracheophyta</taxon>
        <taxon>Spermatophyta</taxon>
        <taxon>Magnoliopsida</taxon>
        <taxon>eudicotyledons</taxon>
        <taxon>Gunneridae</taxon>
        <taxon>Pentapetalae</taxon>
        <taxon>rosids</taxon>
        <taxon>fabids</taxon>
        <taxon>Fabales</taxon>
        <taxon>Fabaceae</taxon>
        <taxon>Papilionoideae</taxon>
        <taxon>50 kb inversion clade</taxon>
        <taxon>NPAAA clade</taxon>
        <taxon>indigoferoid/millettioid clade</taxon>
        <taxon>Phaseoleae</taxon>
        <taxon>Glycine</taxon>
        <taxon>Glycine subgen. Soja</taxon>
    </lineage>
</organism>
<protein>
    <recommendedName>
        <fullName>Profilin-1</fullName>
    </recommendedName>
    <alternativeName>
        <fullName>GmPRO1</fullName>
    </alternativeName>
    <allergenName>Gly m 3.0101</allergenName>
</protein>
<evidence type="ECO:0000250" key="1"/>
<evidence type="ECO:0000269" key="2">
    <source>
    </source>
</evidence>
<evidence type="ECO:0000305" key="3"/>